<reference key="1">
    <citation type="journal article" date="1986" name="Proc. Natl. Acad. Sci. U.S.A.">
        <title>Two prohormones for gastrin-releasing peptide are encoded by two mRNAs differing by 19 nucleotides.</title>
        <authorList>
            <person name="Spindel E.R."/>
            <person name="Zilberberg M.D."/>
            <person name="Habener J.F."/>
            <person name="Chin W.W."/>
        </authorList>
    </citation>
    <scope>NUCLEOTIDE SEQUENCE [MRNA] (ISOFORM 1)</scope>
    <scope>NUCLEOTIDE SEQUENCE [MRNA] OF 70-148 (ISOFORM 2)</scope>
    <scope>VARIANT SER-4</scope>
</reference>
<reference key="2">
    <citation type="journal article" date="1988" name="Mol. Cell. Biol.">
        <title>Posttranslational processing of endogenous and of baculovirus-expressed human gastrin-releasing peptide precursor.</title>
        <authorList>
            <person name="Lebacq-Verheyden A.-M."/>
            <person name="Kasprzyk P.G."/>
            <person name="Raum M.G."/>
            <person name="van Wyke Coelingh K."/>
            <person name="Lebacq J.A."/>
            <person name="Battey J.F."/>
        </authorList>
    </citation>
    <scope>NUCLEOTIDE SEQUENCE [MRNA]</scope>
    <scope>AMIDATION AT MET-50</scope>
    <scope>SUBCELLULAR LOCATION</scope>
</reference>
<reference key="3">
    <citation type="journal article" date="1986" name="J. Biol. Chem.">
        <title>Expression of the gastrin-releasing peptide gene in human small cell lung cancer. Evidence for alternative processing resulting in three distinct mRNAs.</title>
        <authorList>
            <person name="Sausville E.A."/>
            <person name="Lebacq-Verheyden A.-M."/>
            <person name="Spindel E.R."/>
            <person name="Cuttitta F."/>
            <person name="Gazdar A.F."/>
            <person name="Battey J.F."/>
        </authorList>
    </citation>
    <scope>NUCLEOTIDE SEQUENCE [GENOMIC DNA]</scope>
    <scope>ALTERNATIVE SPLICING</scope>
</reference>
<reference key="4">
    <citation type="submission" date="2003-05" db="EMBL/GenBank/DDBJ databases">
        <title>Cloning of human full-length CDSs in BD Creator(TM) system donor vector.</title>
        <authorList>
            <person name="Kalnine N."/>
            <person name="Chen X."/>
            <person name="Rolfs A."/>
            <person name="Halleck A."/>
            <person name="Hines L."/>
            <person name="Eisenstein S."/>
            <person name="Koundinya M."/>
            <person name="Raphael J."/>
            <person name="Moreira D."/>
            <person name="Kelley T."/>
            <person name="LaBaer J."/>
            <person name="Lin Y."/>
            <person name="Phelan M."/>
            <person name="Farmer A."/>
        </authorList>
    </citation>
    <scope>NUCLEOTIDE SEQUENCE [LARGE SCALE MRNA] (ISOFORM 1)</scope>
</reference>
<reference key="5">
    <citation type="journal article" date="2005" name="Nature">
        <title>DNA sequence and analysis of human chromosome 18.</title>
        <authorList>
            <person name="Nusbaum C."/>
            <person name="Zody M.C."/>
            <person name="Borowsky M.L."/>
            <person name="Kamal M."/>
            <person name="Kodira C.D."/>
            <person name="Taylor T.D."/>
            <person name="Whittaker C.A."/>
            <person name="Chang J.L."/>
            <person name="Cuomo C.A."/>
            <person name="Dewar K."/>
            <person name="FitzGerald M.G."/>
            <person name="Yang X."/>
            <person name="Abouelleil A."/>
            <person name="Allen N.R."/>
            <person name="Anderson S."/>
            <person name="Bloom T."/>
            <person name="Bugalter B."/>
            <person name="Butler J."/>
            <person name="Cook A."/>
            <person name="DeCaprio D."/>
            <person name="Engels R."/>
            <person name="Garber M."/>
            <person name="Gnirke A."/>
            <person name="Hafez N."/>
            <person name="Hall J.L."/>
            <person name="Norman C.H."/>
            <person name="Itoh T."/>
            <person name="Jaffe D.B."/>
            <person name="Kuroki Y."/>
            <person name="Lehoczky J."/>
            <person name="Lui A."/>
            <person name="Macdonald P."/>
            <person name="Mauceli E."/>
            <person name="Mikkelsen T.S."/>
            <person name="Naylor J.W."/>
            <person name="Nicol R."/>
            <person name="Nguyen C."/>
            <person name="Noguchi H."/>
            <person name="O'Leary S.B."/>
            <person name="Piqani B."/>
            <person name="Smith C.L."/>
            <person name="Talamas J.A."/>
            <person name="Topham K."/>
            <person name="Totoki Y."/>
            <person name="Toyoda A."/>
            <person name="Wain H.M."/>
            <person name="Young S.K."/>
            <person name="Zeng Q."/>
            <person name="Zimmer A.R."/>
            <person name="Fujiyama A."/>
            <person name="Hattori M."/>
            <person name="Birren B.W."/>
            <person name="Sakaki Y."/>
            <person name="Lander E.S."/>
        </authorList>
    </citation>
    <scope>NUCLEOTIDE SEQUENCE [LARGE SCALE GENOMIC DNA]</scope>
</reference>
<reference key="6">
    <citation type="submission" date="2005-07" db="EMBL/GenBank/DDBJ databases">
        <authorList>
            <person name="Mural R.J."/>
            <person name="Istrail S."/>
            <person name="Sutton G.G."/>
            <person name="Florea L."/>
            <person name="Halpern A.L."/>
            <person name="Mobarry C.M."/>
            <person name="Lippert R."/>
            <person name="Walenz B."/>
            <person name="Shatkay H."/>
            <person name="Dew I."/>
            <person name="Miller J.R."/>
            <person name="Flanigan M.J."/>
            <person name="Edwards N.J."/>
            <person name="Bolanos R."/>
            <person name="Fasulo D."/>
            <person name="Halldorsson B.V."/>
            <person name="Hannenhalli S."/>
            <person name="Turner R."/>
            <person name="Yooseph S."/>
            <person name="Lu F."/>
            <person name="Nusskern D.R."/>
            <person name="Shue B.C."/>
            <person name="Zheng X.H."/>
            <person name="Zhong F."/>
            <person name="Delcher A.L."/>
            <person name="Huson D.H."/>
            <person name="Kravitz S.A."/>
            <person name="Mouchard L."/>
            <person name="Reinert K."/>
            <person name="Remington K.A."/>
            <person name="Clark A.G."/>
            <person name="Waterman M.S."/>
            <person name="Eichler E.E."/>
            <person name="Adams M.D."/>
            <person name="Hunkapiller M.W."/>
            <person name="Myers E.W."/>
            <person name="Venter J.C."/>
        </authorList>
    </citation>
    <scope>NUCLEOTIDE SEQUENCE [LARGE SCALE GENOMIC DNA]</scope>
</reference>
<reference key="7">
    <citation type="journal article" date="2004" name="Genome Res.">
        <title>The status, quality, and expansion of the NIH full-length cDNA project: the Mammalian Gene Collection (MGC).</title>
        <authorList>
            <consortium name="The MGC Project Team"/>
        </authorList>
    </citation>
    <scope>NUCLEOTIDE SEQUENCE [LARGE SCALE MRNA] (ISOFORM 1)</scope>
    <source>
        <tissue>Lung</tissue>
    </source>
</reference>
<reference key="8">
    <citation type="journal article" date="2015" name="RSC Adv.">
        <title>Conformational ensembles of neuromedin C reveal a progressive coil-helix transition within a binding-induced folding mechanism.</title>
        <authorList>
            <person name="Adrover M."/>
            <person name="Sanchis P."/>
            <person name="Vilanova B."/>
            <person name="Pauwels K."/>
            <person name="Martorell G."/>
            <person name="Perez J.J."/>
        </authorList>
    </citation>
    <scope>STRUCTURE BY NMR OF 41-50</scope>
</reference>
<evidence type="ECO:0000250" key="1">
    <source>
        <dbReference type="UniProtKB" id="P08989"/>
    </source>
</evidence>
<evidence type="ECO:0000250" key="2">
    <source>
        <dbReference type="UniProtKB" id="P24393"/>
    </source>
</evidence>
<evidence type="ECO:0000250" key="3">
    <source>
        <dbReference type="UniProtKB" id="P63153"/>
    </source>
</evidence>
<evidence type="ECO:0000250" key="4">
    <source>
        <dbReference type="UniProtKB" id="Q863C3"/>
    </source>
</evidence>
<evidence type="ECO:0000250" key="5">
    <source>
        <dbReference type="UniProtKB" id="Q8R1I2"/>
    </source>
</evidence>
<evidence type="ECO:0000256" key="6">
    <source>
        <dbReference type="SAM" id="MobiDB-lite"/>
    </source>
</evidence>
<evidence type="ECO:0000269" key="7">
    <source>
    </source>
</evidence>
<evidence type="ECO:0000269" key="8">
    <source>
    </source>
</evidence>
<evidence type="ECO:0000303" key="9">
    <source>
    </source>
</evidence>
<evidence type="ECO:0000305" key="10"/>
<evidence type="ECO:0007829" key="11">
    <source>
        <dbReference type="PDB" id="2N0E"/>
    </source>
</evidence>
<keyword id="KW-0002">3D-structure</keyword>
<keyword id="KW-0025">Alternative splicing</keyword>
<keyword id="KW-0027">Amidation</keyword>
<keyword id="KW-0966">Cell projection</keyword>
<keyword id="KW-0165">Cleavage on pair of basic residues</keyword>
<keyword id="KW-0968">Cytoplasmic vesicle</keyword>
<keyword id="KW-0467">Mast cell degranulation</keyword>
<keyword id="KW-1267">Proteomics identification</keyword>
<keyword id="KW-1185">Reference proteome</keyword>
<keyword id="KW-0964">Secreted</keyword>
<keyword id="KW-0732">Signal</keyword>
<accession>P07492</accession>
<accession>P07491</accession>
<accession>P81553</accession>
<accession>Q14454</accession>
<accession>Q53YA0</accession>
<accession>Q9BSY7</accession>
<name>GRP_HUMAN</name>
<dbReference type="EMBL" id="K02054">
    <property type="protein sequence ID" value="AAA52613.1"/>
    <property type="molecule type" value="mRNA"/>
</dbReference>
<dbReference type="EMBL" id="M12550">
    <property type="status" value="NOT_ANNOTATED_CDS"/>
    <property type="molecule type" value="mRNA"/>
</dbReference>
<dbReference type="EMBL" id="M12512">
    <property type="protein sequence ID" value="AAA52612.1"/>
    <property type="status" value="ALT_SEQ"/>
    <property type="molecule type" value="Genomic_DNA"/>
</dbReference>
<dbReference type="EMBL" id="M12511">
    <property type="protein sequence ID" value="AAA52612.1"/>
    <property type="status" value="JOINED"/>
    <property type="molecule type" value="Genomic_DNA"/>
</dbReference>
<dbReference type="EMBL" id="M12512">
    <property type="protein sequence ID" value="AAA52611.1"/>
    <property type="molecule type" value="Genomic_DNA"/>
</dbReference>
<dbReference type="EMBL" id="M12511">
    <property type="protein sequence ID" value="AAA52611.1"/>
    <property type="status" value="JOINED"/>
    <property type="molecule type" value="Genomic_DNA"/>
</dbReference>
<dbReference type="EMBL" id="BT006803">
    <property type="protein sequence ID" value="AAP35449.1"/>
    <property type="molecule type" value="mRNA"/>
</dbReference>
<dbReference type="EMBL" id="AC067859">
    <property type="status" value="NOT_ANNOTATED_CDS"/>
    <property type="molecule type" value="Genomic_DNA"/>
</dbReference>
<dbReference type="EMBL" id="CH471096">
    <property type="protein sequence ID" value="EAW63091.1"/>
    <property type="molecule type" value="Genomic_DNA"/>
</dbReference>
<dbReference type="EMBL" id="BC004488">
    <property type="protein sequence ID" value="AAH04488.1"/>
    <property type="molecule type" value="mRNA"/>
</dbReference>
<dbReference type="CCDS" id="CCDS11971.1">
    <molecule id="P07492-1"/>
</dbReference>
<dbReference type="CCDS" id="CCDS45877.1">
    <molecule id="P07492-3"/>
</dbReference>
<dbReference type="CCDS" id="CCDS45878.1">
    <molecule id="P07492-2"/>
</dbReference>
<dbReference type="PIR" id="A26182">
    <property type="entry name" value="A26182"/>
</dbReference>
<dbReference type="PIR" id="B26182">
    <property type="entry name" value="B26182"/>
</dbReference>
<dbReference type="RefSeq" id="NP_001012530.1">
    <molecule id="P07492-3"/>
    <property type="nucleotide sequence ID" value="NM_001012512.3"/>
</dbReference>
<dbReference type="RefSeq" id="NP_001012531.1">
    <molecule id="P07492-2"/>
    <property type="nucleotide sequence ID" value="NM_001012513.3"/>
</dbReference>
<dbReference type="RefSeq" id="NP_002082.2">
    <molecule id="P07492-1"/>
    <property type="nucleotide sequence ID" value="NM_002091.4"/>
</dbReference>
<dbReference type="PDB" id="2N0B">
    <property type="method" value="NMR"/>
    <property type="chains" value="A=41-50"/>
</dbReference>
<dbReference type="PDB" id="2N0C">
    <property type="method" value="NMR"/>
    <property type="chains" value="A=41-50"/>
</dbReference>
<dbReference type="PDB" id="2N0D">
    <property type="method" value="NMR"/>
    <property type="chains" value="A=41-50"/>
</dbReference>
<dbReference type="PDB" id="2N0E">
    <property type="method" value="NMR"/>
    <property type="chains" value="A=41-50"/>
</dbReference>
<dbReference type="PDB" id="2N0F">
    <property type="method" value="NMR"/>
    <property type="chains" value="A=41-50"/>
</dbReference>
<dbReference type="PDB" id="2N0G">
    <property type="method" value="NMR"/>
    <property type="chains" value="A=41-50"/>
</dbReference>
<dbReference type="PDB" id="2N0H">
    <property type="method" value="NMR"/>
    <property type="chains" value="A=41-50"/>
</dbReference>
<dbReference type="PDB" id="7W3Z">
    <property type="method" value="EM"/>
    <property type="resolution" value="3.00 A"/>
    <property type="chains" value="L=39-50"/>
</dbReference>
<dbReference type="PDB" id="8H0Q">
    <property type="method" value="EM"/>
    <property type="resolution" value="3.30 A"/>
    <property type="chains" value="L=42-50"/>
</dbReference>
<dbReference type="PDBsum" id="2N0B"/>
<dbReference type="PDBsum" id="2N0C"/>
<dbReference type="PDBsum" id="2N0D"/>
<dbReference type="PDBsum" id="2N0E"/>
<dbReference type="PDBsum" id="2N0F"/>
<dbReference type="PDBsum" id="2N0G"/>
<dbReference type="PDBsum" id="2N0H"/>
<dbReference type="PDBsum" id="7W3Z"/>
<dbReference type="PDBsum" id="8H0Q"/>
<dbReference type="EMDB" id="EMD-34414"/>
<dbReference type="SMR" id="P07492"/>
<dbReference type="BioGRID" id="109179">
    <property type="interactions" value="4"/>
</dbReference>
<dbReference type="FunCoup" id="P07492">
    <property type="interactions" value="396"/>
</dbReference>
<dbReference type="IntAct" id="P07492">
    <property type="interactions" value="1"/>
</dbReference>
<dbReference type="STRING" id="9606.ENSP00000256857"/>
<dbReference type="BindingDB" id="P07492"/>
<dbReference type="GlyGen" id="P07492">
    <property type="glycosylation" value="2 sites, 1 O-linked glycan (2 sites)"/>
</dbReference>
<dbReference type="iPTMnet" id="P07492"/>
<dbReference type="PhosphoSitePlus" id="P07492"/>
<dbReference type="BioMuta" id="GRP"/>
<dbReference type="DMDM" id="308153451"/>
<dbReference type="MassIVE" id="P07492"/>
<dbReference type="PaxDb" id="9606-ENSP00000256857"/>
<dbReference type="PeptideAtlas" id="P07492"/>
<dbReference type="ProteomicsDB" id="52008">
    <molecule id="P07492-1"/>
</dbReference>
<dbReference type="ProteomicsDB" id="52009">
    <molecule id="P07492-2"/>
</dbReference>
<dbReference type="ProteomicsDB" id="52010">
    <molecule id="P07492-3"/>
</dbReference>
<dbReference type="Antibodypedia" id="1534">
    <property type="antibodies" value="312 antibodies from 30 providers"/>
</dbReference>
<dbReference type="DNASU" id="2922"/>
<dbReference type="Ensembl" id="ENST00000256857.7">
    <molecule id="P07492-1"/>
    <property type="protein sequence ID" value="ENSP00000256857.2"/>
    <property type="gene ID" value="ENSG00000134443.10"/>
</dbReference>
<dbReference type="Ensembl" id="ENST00000420468.6">
    <molecule id="P07492-3"/>
    <property type="protein sequence ID" value="ENSP00000389696.2"/>
    <property type="gene ID" value="ENSG00000134443.10"/>
</dbReference>
<dbReference type="Ensembl" id="ENST00000529320.2">
    <molecule id="P07492-2"/>
    <property type="protein sequence ID" value="ENSP00000434101.1"/>
    <property type="gene ID" value="ENSG00000134443.10"/>
</dbReference>
<dbReference type="GeneID" id="2922"/>
<dbReference type="KEGG" id="hsa:2922"/>
<dbReference type="MANE-Select" id="ENST00000256857.7">
    <property type="protein sequence ID" value="ENSP00000256857.2"/>
    <property type="RefSeq nucleotide sequence ID" value="NM_002091.5"/>
    <property type="RefSeq protein sequence ID" value="NP_002082.2"/>
</dbReference>
<dbReference type="UCSC" id="uc002lhu.4">
    <molecule id="P07492-1"/>
    <property type="organism name" value="human"/>
</dbReference>
<dbReference type="AGR" id="HGNC:4605"/>
<dbReference type="CTD" id="2922"/>
<dbReference type="DisGeNET" id="2922"/>
<dbReference type="GeneCards" id="GRP"/>
<dbReference type="HGNC" id="HGNC:4605">
    <property type="gene designation" value="GRP"/>
</dbReference>
<dbReference type="HPA" id="ENSG00000134443">
    <property type="expression patterns" value="Tissue enhanced (brain, lung, stomach)"/>
</dbReference>
<dbReference type="MIM" id="137260">
    <property type="type" value="gene"/>
</dbReference>
<dbReference type="neXtProt" id="NX_P07492"/>
<dbReference type="OpenTargets" id="ENSG00000134443"/>
<dbReference type="PharmGKB" id="PA28999"/>
<dbReference type="VEuPathDB" id="HostDB:ENSG00000134443"/>
<dbReference type="eggNOG" id="ENOG502S4DG">
    <property type="taxonomic scope" value="Eukaryota"/>
</dbReference>
<dbReference type="GeneTree" id="ENSGT00940000154470"/>
<dbReference type="HOGENOM" id="CLU_144892_0_0_1"/>
<dbReference type="InParanoid" id="P07492"/>
<dbReference type="OMA" id="KDMMDYL"/>
<dbReference type="OrthoDB" id="9879745at2759"/>
<dbReference type="PAN-GO" id="P07492">
    <property type="GO annotations" value="3 GO annotations based on evolutionary models"/>
</dbReference>
<dbReference type="PhylomeDB" id="P07492"/>
<dbReference type="TreeFam" id="TF336391"/>
<dbReference type="PathwayCommons" id="P07492"/>
<dbReference type="Reactome" id="R-HSA-375276">
    <property type="pathway name" value="Peptide ligand-binding receptors"/>
</dbReference>
<dbReference type="Reactome" id="R-HSA-381771">
    <property type="pathway name" value="Synthesis, secretion, and inactivation of Glucagon-like Peptide-1 (GLP-1)"/>
</dbReference>
<dbReference type="Reactome" id="R-HSA-416476">
    <property type="pathway name" value="G alpha (q) signalling events"/>
</dbReference>
<dbReference type="SignaLink" id="P07492"/>
<dbReference type="SIGNOR" id="P07492"/>
<dbReference type="BioGRID-ORCS" id="2922">
    <property type="hits" value="12 hits in 1151 CRISPR screens"/>
</dbReference>
<dbReference type="EvolutionaryTrace" id="P07492"/>
<dbReference type="GeneWiki" id="Gastrin-releasing_peptide"/>
<dbReference type="GenomeRNAi" id="2922"/>
<dbReference type="Pharos" id="P07492">
    <property type="development level" value="Tbio"/>
</dbReference>
<dbReference type="PRO" id="PR:P07492"/>
<dbReference type="Proteomes" id="UP000005640">
    <property type="component" value="Chromosome 18"/>
</dbReference>
<dbReference type="RNAct" id="P07492">
    <property type="molecule type" value="protein"/>
</dbReference>
<dbReference type="Bgee" id="ENSG00000134443">
    <property type="expression patterns" value="Expressed in male germ line stem cell (sensu Vertebrata) in testis and 123 other cell types or tissues"/>
</dbReference>
<dbReference type="ExpressionAtlas" id="P07492">
    <property type="expression patterns" value="baseline and differential"/>
</dbReference>
<dbReference type="GO" id="GO:0005576">
    <property type="term" value="C:extracellular region"/>
    <property type="evidence" value="ECO:0000304"/>
    <property type="project" value="Reactome"/>
</dbReference>
<dbReference type="GO" id="GO:0005615">
    <property type="term" value="C:extracellular space"/>
    <property type="evidence" value="ECO:0000314"/>
    <property type="project" value="UniProtKB"/>
</dbReference>
<dbReference type="GO" id="GO:0043005">
    <property type="term" value="C:neuron projection"/>
    <property type="evidence" value="ECO:0000250"/>
    <property type="project" value="UniProtKB"/>
</dbReference>
<dbReference type="GO" id="GO:0034774">
    <property type="term" value="C:secretory granule lumen"/>
    <property type="evidence" value="ECO:0000250"/>
    <property type="project" value="UniProtKB"/>
</dbReference>
<dbReference type="GO" id="GO:0005184">
    <property type="term" value="F:neuropeptide hormone activity"/>
    <property type="evidence" value="ECO:0000314"/>
    <property type="project" value="MGI"/>
</dbReference>
<dbReference type="GO" id="GO:0005102">
    <property type="term" value="F:signaling receptor binding"/>
    <property type="evidence" value="ECO:0000303"/>
    <property type="project" value="ProtInc"/>
</dbReference>
<dbReference type="GO" id="GO:0043303">
    <property type="term" value="P:mast cell degranulation"/>
    <property type="evidence" value="ECO:0000250"/>
    <property type="project" value="UniProtKB"/>
</dbReference>
<dbReference type="GO" id="GO:1903817">
    <property type="term" value="P:negative regulation of voltage-gated potassium channel activity"/>
    <property type="evidence" value="ECO:0000250"/>
    <property type="project" value="UniProtKB"/>
</dbReference>
<dbReference type="GO" id="GO:1905151">
    <property type="term" value="P:negative regulation of voltage-gated sodium channel activity"/>
    <property type="evidence" value="ECO:0000250"/>
    <property type="project" value="UniProtKB"/>
</dbReference>
<dbReference type="GO" id="GO:0007218">
    <property type="term" value="P:neuropeptide signaling pathway"/>
    <property type="evidence" value="ECO:0000314"/>
    <property type="project" value="MGI"/>
</dbReference>
<dbReference type="GO" id="GO:2000987">
    <property type="term" value="P:positive regulation of behavioral fear response"/>
    <property type="evidence" value="ECO:0000250"/>
    <property type="project" value="UniProtKB"/>
</dbReference>
<dbReference type="GO" id="GO:0090277">
    <property type="term" value="P:positive regulation of peptide hormone secretion"/>
    <property type="evidence" value="ECO:0000250"/>
    <property type="project" value="UniProtKB"/>
</dbReference>
<dbReference type="GO" id="GO:1900738">
    <property type="term" value="P:positive regulation of phospholipase C-activating G protein-coupled receptor signaling pathway"/>
    <property type="evidence" value="ECO:0000250"/>
    <property type="project" value="UniProtKB"/>
</dbReference>
<dbReference type="GO" id="GO:1903942">
    <property type="term" value="P:positive regulation of respiratory gaseous exchange"/>
    <property type="evidence" value="ECO:0000250"/>
    <property type="project" value="UniProtKB"/>
</dbReference>
<dbReference type="GO" id="GO:0036343">
    <property type="term" value="P:psychomotor behavior"/>
    <property type="evidence" value="ECO:0007669"/>
    <property type="project" value="Ensembl"/>
</dbReference>
<dbReference type="GO" id="GO:0043207">
    <property type="term" value="P:response to external biotic stimulus"/>
    <property type="evidence" value="ECO:0007669"/>
    <property type="project" value="Ensembl"/>
</dbReference>
<dbReference type="GO" id="GO:0007165">
    <property type="term" value="P:signal transduction"/>
    <property type="evidence" value="ECO:0000303"/>
    <property type="project" value="ProtInc"/>
</dbReference>
<dbReference type="GO" id="GO:0035176">
    <property type="term" value="P:social behavior"/>
    <property type="evidence" value="ECO:0007669"/>
    <property type="project" value="Ensembl"/>
</dbReference>
<dbReference type="InterPro" id="IPR000874">
    <property type="entry name" value="Bombesin"/>
</dbReference>
<dbReference type="PANTHER" id="PTHR16866">
    <property type="entry name" value="GASTRIN-RELEASING PEPTIDE"/>
    <property type="match status" value="1"/>
</dbReference>
<dbReference type="PANTHER" id="PTHR16866:SF2">
    <property type="entry name" value="GASTRIN-RELEASING PEPTIDE"/>
    <property type="match status" value="1"/>
</dbReference>
<dbReference type="Pfam" id="PF02044">
    <property type="entry name" value="Bombesin"/>
    <property type="match status" value="1"/>
</dbReference>
<dbReference type="PROSITE" id="PS00257">
    <property type="entry name" value="BOMBESIN"/>
    <property type="match status" value="1"/>
</dbReference>
<protein>
    <recommendedName>
        <fullName>Gastrin-releasing peptide</fullName>
        <shortName>GRP</shortName>
    </recommendedName>
    <component>
        <recommendedName>
            <fullName>Neuromedin-C</fullName>
        </recommendedName>
        <alternativeName>
            <fullName>GRP-10</fullName>
        </alternativeName>
        <alternativeName>
            <fullName evidence="5">GRP18-27</fullName>
        </alternativeName>
    </component>
</protein>
<sequence length="148" mass="16213">MRGRELPLVLLALVLCLAPRGRAVPLPAGGGTVLTKMYPRGNHWAVGHLMGKKSTGESSSVSERGSLKQQLREYIRWEEAARNLLGLIEAKENRNHQPPQPKALGNQQPSWDSEDSSNFKDVGSKGKVGRLSAPGSQREGRNPQLNQQ</sequence>
<gene>
    <name type="primary">GRP</name>
</gene>
<organism>
    <name type="scientific">Homo sapiens</name>
    <name type="common">Human</name>
    <dbReference type="NCBI Taxonomy" id="9606"/>
    <lineage>
        <taxon>Eukaryota</taxon>
        <taxon>Metazoa</taxon>
        <taxon>Chordata</taxon>
        <taxon>Craniata</taxon>
        <taxon>Vertebrata</taxon>
        <taxon>Euteleostomi</taxon>
        <taxon>Mammalia</taxon>
        <taxon>Eutheria</taxon>
        <taxon>Euarchontoglires</taxon>
        <taxon>Primates</taxon>
        <taxon>Haplorrhini</taxon>
        <taxon>Catarrhini</taxon>
        <taxon>Hominidae</taxon>
        <taxon>Homo</taxon>
    </lineage>
</organism>
<feature type="signal peptide" evidence="1">
    <location>
        <begin position="1"/>
        <end position="23"/>
    </location>
</feature>
<feature type="peptide" id="PRO_0000003035" description="Gastrin-releasing peptide" evidence="1">
    <location>
        <begin position="24"/>
        <end position="50"/>
    </location>
</feature>
<feature type="peptide" id="PRO_0000003036" description="Neuromedin-C" evidence="4">
    <location>
        <begin position="41"/>
        <end position="50"/>
    </location>
</feature>
<feature type="propeptide" id="PRO_0000003037" evidence="1">
    <location>
        <begin position="54"/>
        <end position="148"/>
    </location>
</feature>
<feature type="region of interest" description="Disordered" evidence="6">
    <location>
        <begin position="89"/>
        <end position="148"/>
    </location>
</feature>
<feature type="modified residue" description="Methionine amide" evidence="8">
    <location>
        <position position="50"/>
    </location>
</feature>
<feature type="splice variant" id="VSP_000549" description="In isoform 2." evidence="9">
    <original>VGSKGKVGRLSAPGSQREGRNPQLNQQ</original>
    <variation>LVDSLLQVLNVKEGTPS</variation>
    <location>
        <begin position="122"/>
        <end position="148"/>
    </location>
</feature>
<feature type="splice variant" id="VSP_000550" description="In isoform 3." evidence="10">
    <location>
        <begin position="128"/>
        <end position="134"/>
    </location>
</feature>
<feature type="sequence variant" id="VAR_027834" description="In dbSNP:rs1062557." evidence="7">
    <original>R</original>
    <variation>S</variation>
    <location>
        <position position="4"/>
    </location>
</feature>
<feature type="helix" evidence="11">
    <location>
        <begin position="45"/>
        <end position="48"/>
    </location>
</feature>
<comment type="function">
    <text evidence="2 3 5">Stimulates the release of gastrin and other gastrointestinal hormones (By similarity). Contributes to the perception of prurient stimuli and to the transmission of itch signals in the spinal cord that promote scratching behavior (By similarity). Contributes primarily to nonhistaminergic itch sensation (By similarity). In one study, shown to act in the amygdala as part of an inhibitory network which inhibits memory specifically related to learned fear (By similarity). In another study, shown to act on vasoactive intestinal peptide (VIP)-expressing cells in the auditory cortex, most likely via extrasynaptic diffusion from local and long-range sources, to mediate disinhibition of glutamatergic cells via VIP cell-specific GRPR signaling which leads to enhanced auditory fear memories (By similarity). Contributes to the regulation of food intake (By similarity). Inhibits voltage-gated sodium channels but enhances voltage-gated potassium channels in hippocampal neurons (By similarity). Induces sighing by acting directly on the pre-Botzinger complex, a cluster of several thousand neurons in the ventrolateral medulla responsible for inspiration during respiratory activity (By similarity).</text>
</comment>
<comment type="function">
    <molecule>Neuromedin-C</molecule>
    <text evidence="5">Induces an itch response through activation of receptors present on mast cells, triggering mast cell degranulation.</text>
</comment>
<comment type="interaction">
    <interactant intactId="EBI-12821367">
        <id>P07492</id>
    </interactant>
    <interactant intactId="EBI-750671">
        <id>Q15699</id>
        <label>ALX1</label>
    </interactant>
    <organismsDiffer>false</organismsDiffer>
    <experiments>3</experiments>
</comment>
<comment type="subcellular location">
    <subcellularLocation>
        <location evidence="8">Secreted</location>
    </subcellularLocation>
    <subcellularLocation>
        <location evidence="4">Cytoplasmic vesicle</location>
        <location evidence="4">Secretory vesicle lumen</location>
    </subcellularLocation>
    <subcellularLocation>
        <location evidence="5">Cell projection</location>
        <location evidence="5">Neuron projection</location>
    </subcellularLocation>
    <text evidence="5">In neurons of the retrotrapezoid nucleus/parafacial respiratory group, expressed on neuron projections which project into the pre-Botzinger complex.</text>
</comment>
<comment type="alternative products">
    <event type="alternative splicing"/>
    <isoform>
        <id>P07492-1</id>
        <name>1</name>
        <sequence type="displayed"/>
    </isoform>
    <isoform>
        <id>P07492-2</id>
        <name>2</name>
        <sequence type="described" ref="VSP_000549"/>
    </isoform>
    <isoform>
        <id>P07492-3</id>
        <name>3</name>
        <sequence type="described" ref="VSP_000550"/>
    </isoform>
</comment>
<comment type="similarity">
    <text evidence="10">Belongs to the bombesin/neuromedin-B/ranatensin family.</text>
</comment>
<comment type="sequence caution" evidence="10">
    <conflict type="erroneous gene model prediction">
        <sequence resource="EMBL-CDS" id="AAA52612"/>
    </conflict>
</comment>
<comment type="online information" name="Wikipedia">
    <link uri="https://en.wikipedia.org/wiki/Gastrin_releasing_peptide"/>
    <text>Gastrin-releasing peptide entry</text>
</comment>
<proteinExistence type="evidence at protein level"/>